<organism>
    <name type="scientific">Bacillus mycoides (strain KBAB4)</name>
    <name type="common">Bacillus weihenstephanensis</name>
    <dbReference type="NCBI Taxonomy" id="315730"/>
    <lineage>
        <taxon>Bacteria</taxon>
        <taxon>Bacillati</taxon>
        <taxon>Bacillota</taxon>
        <taxon>Bacilli</taxon>
        <taxon>Bacillales</taxon>
        <taxon>Bacillaceae</taxon>
        <taxon>Bacillus</taxon>
        <taxon>Bacillus cereus group</taxon>
    </lineage>
</organism>
<protein>
    <recommendedName>
        <fullName evidence="1">Alanine--tRNA ligase</fullName>
        <ecNumber evidence="1">6.1.1.7</ecNumber>
    </recommendedName>
    <alternativeName>
        <fullName evidence="1">Alanyl-tRNA synthetase</fullName>
        <shortName evidence="1">AlaRS</shortName>
    </alternativeName>
</protein>
<name>SYA_BACMK</name>
<keyword id="KW-0030">Aminoacyl-tRNA synthetase</keyword>
<keyword id="KW-0067">ATP-binding</keyword>
<keyword id="KW-0963">Cytoplasm</keyword>
<keyword id="KW-0436">Ligase</keyword>
<keyword id="KW-0479">Metal-binding</keyword>
<keyword id="KW-0547">Nucleotide-binding</keyword>
<keyword id="KW-0648">Protein biosynthesis</keyword>
<keyword id="KW-0694">RNA-binding</keyword>
<keyword id="KW-0820">tRNA-binding</keyword>
<keyword id="KW-0862">Zinc</keyword>
<comment type="function">
    <text evidence="1">Catalyzes the attachment of alanine to tRNA(Ala) in a two-step reaction: alanine is first activated by ATP to form Ala-AMP and then transferred to the acceptor end of tRNA(Ala). Also edits incorrectly charged Ser-tRNA(Ala) and Gly-tRNA(Ala) via its editing domain.</text>
</comment>
<comment type="catalytic activity">
    <reaction evidence="1">
        <text>tRNA(Ala) + L-alanine + ATP = L-alanyl-tRNA(Ala) + AMP + diphosphate</text>
        <dbReference type="Rhea" id="RHEA:12540"/>
        <dbReference type="Rhea" id="RHEA-COMP:9657"/>
        <dbReference type="Rhea" id="RHEA-COMP:9923"/>
        <dbReference type="ChEBI" id="CHEBI:30616"/>
        <dbReference type="ChEBI" id="CHEBI:33019"/>
        <dbReference type="ChEBI" id="CHEBI:57972"/>
        <dbReference type="ChEBI" id="CHEBI:78442"/>
        <dbReference type="ChEBI" id="CHEBI:78497"/>
        <dbReference type="ChEBI" id="CHEBI:456215"/>
        <dbReference type="EC" id="6.1.1.7"/>
    </reaction>
</comment>
<comment type="cofactor">
    <cofactor evidence="1">
        <name>Zn(2+)</name>
        <dbReference type="ChEBI" id="CHEBI:29105"/>
    </cofactor>
    <text evidence="1">Binds 1 zinc ion per subunit.</text>
</comment>
<comment type="subcellular location">
    <subcellularLocation>
        <location evidence="1">Cytoplasm</location>
    </subcellularLocation>
</comment>
<comment type="domain">
    <text evidence="1">Consists of three domains; the N-terminal catalytic domain, the editing domain and the C-terminal C-Ala domain. The editing domain removes incorrectly charged amino acids, while the C-Ala domain, along with tRNA(Ala), serves as a bridge to cooperatively bring together the editing and aminoacylation centers thus stimulating deacylation of misacylated tRNAs.</text>
</comment>
<comment type="similarity">
    <text evidence="1">Belongs to the class-II aminoacyl-tRNA synthetase family.</text>
</comment>
<proteinExistence type="inferred from homology"/>
<accession>A9VI09</accession>
<dbReference type="EC" id="6.1.1.7" evidence="1"/>
<dbReference type="EMBL" id="CP000903">
    <property type="protein sequence ID" value="ABY45394.1"/>
    <property type="molecule type" value="Genomic_DNA"/>
</dbReference>
<dbReference type="RefSeq" id="WP_002034110.1">
    <property type="nucleotide sequence ID" value="NC_010184.1"/>
</dbReference>
<dbReference type="SMR" id="A9VI09"/>
<dbReference type="KEGG" id="bwe:BcerKBAB4_4235"/>
<dbReference type="eggNOG" id="COG0013">
    <property type="taxonomic scope" value="Bacteria"/>
</dbReference>
<dbReference type="HOGENOM" id="CLU_004485_1_1_9"/>
<dbReference type="Proteomes" id="UP000002154">
    <property type="component" value="Chromosome"/>
</dbReference>
<dbReference type="GO" id="GO:0005829">
    <property type="term" value="C:cytosol"/>
    <property type="evidence" value="ECO:0007669"/>
    <property type="project" value="TreeGrafter"/>
</dbReference>
<dbReference type="GO" id="GO:0004813">
    <property type="term" value="F:alanine-tRNA ligase activity"/>
    <property type="evidence" value="ECO:0007669"/>
    <property type="project" value="UniProtKB-UniRule"/>
</dbReference>
<dbReference type="GO" id="GO:0002161">
    <property type="term" value="F:aminoacyl-tRNA deacylase activity"/>
    <property type="evidence" value="ECO:0007669"/>
    <property type="project" value="TreeGrafter"/>
</dbReference>
<dbReference type="GO" id="GO:0005524">
    <property type="term" value="F:ATP binding"/>
    <property type="evidence" value="ECO:0007669"/>
    <property type="project" value="UniProtKB-UniRule"/>
</dbReference>
<dbReference type="GO" id="GO:0140096">
    <property type="term" value="F:catalytic activity, acting on a protein"/>
    <property type="evidence" value="ECO:0007669"/>
    <property type="project" value="UniProtKB-ARBA"/>
</dbReference>
<dbReference type="GO" id="GO:0016740">
    <property type="term" value="F:transferase activity"/>
    <property type="evidence" value="ECO:0007669"/>
    <property type="project" value="UniProtKB-ARBA"/>
</dbReference>
<dbReference type="GO" id="GO:0000049">
    <property type="term" value="F:tRNA binding"/>
    <property type="evidence" value="ECO:0007669"/>
    <property type="project" value="UniProtKB-KW"/>
</dbReference>
<dbReference type="GO" id="GO:0008270">
    <property type="term" value="F:zinc ion binding"/>
    <property type="evidence" value="ECO:0007669"/>
    <property type="project" value="UniProtKB-UniRule"/>
</dbReference>
<dbReference type="GO" id="GO:0006419">
    <property type="term" value="P:alanyl-tRNA aminoacylation"/>
    <property type="evidence" value="ECO:0007669"/>
    <property type="project" value="UniProtKB-UniRule"/>
</dbReference>
<dbReference type="CDD" id="cd00673">
    <property type="entry name" value="AlaRS_core"/>
    <property type="match status" value="1"/>
</dbReference>
<dbReference type="FunFam" id="2.40.30.130:FF:000001">
    <property type="entry name" value="Alanine--tRNA ligase"/>
    <property type="match status" value="1"/>
</dbReference>
<dbReference type="FunFam" id="3.10.310.40:FF:000001">
    <property type="entry name" value="Alanine--tRNA ligase"/>
    <property type="match status" value="1"/>
</dbReference>
<dbReference type="FunFam" id="3.30.54.20:FF:000001">
    <property type="entry name" value="Alanine--tRNA ligase"/>
    <property type="match status" value="1"/>
</dbReference>
<dbReference type="FunFam" id="3.30.930.10:FF:000046">
    <property type="entry name" value="Alanine--tRNA ligase"/>
    <property type="match status" value="1"/>
</dbReference>
<dbReference type="FunFam" id="3.30.980.10:FF:000004">
    <property type="entry name" value="Alanine--tRNA ligase, cytoplasmic"/>
    <property type="match status" value="1"/>
</dbReference>
<dbReference type="Gene3D" id="2.40.30.130">
    <property type="match status" value="1"/>
</dbReference>
<dbReference type="Gene3D" id="3.10.310.40">
    <property type="match status" value="1"/>
</dbReference>
<dbReference type="Gene3D" id="3.30.54.20">
    <property type="match status" value="1"/>
</dbReference>
<dbReference type="Gene3D" id="6.10.250.550">
    <property type="match status" value="1"/>
</dbReference>
<dbReference type="Gene3D" id="3.30.930.10">
    <property type="entry name" value="Bira Bifunctional Protein, Domain 2"/>
    <property type="match status" value="1"/>
</dbReference>
<dbReference type="Gene3D" id="3.30.980.10">
    <property type="entry name" value="Threonyl-trna Synthetase, Chain A, domain 2"/>
    <property type="match status" value="1"/>
</dbReference>
<dbReference type="HAMAP" id="MF_00036_B">
    <property type="entry name" value="Ala_tRNA_synth_B"/>
    <property type="match status" value="1"/>
</dbReference>
<dbReference type="InterPro" id="IPR045864">
    <property type="entry name" value="aa-tRNA-synth_II/BPL/LPL"/>
</dbReference>
<dbReference type="InterPro" id="IPR002318">
    <property type="entry name" value="Ala-tRNA-lgiase_IIc"/>
</dbReference>
<dbReference type="InterPro" id="IPR018162">
    <property type="entry name" value="Ala-tRNA-ligase_IIc_anticod-bd"/>
</dbReference>
<dbReference type="InterPro" id="IPR018165">
    <property type="entry name" value="Ala-tRNA-synth_IIc_core"/>
</dbReference>
<dbReference type="InterPro" id="IPR018164">
    <property type="entry name" value="Ala-tRNA-synth_IIc_N"/>
</dbReference>
<dbReference type="InterPro" id="IPR050058">
    <property type="entry name" value="Ala-tRNA_ligase"/>
</dbReference>
<dbReference type="InterPro" id="IPR023033">
    <property type="entry name" value="Ala_tRNA_ligase_euk/bac"/>
</dbReference>
<dbReference type="InterPro" id="IPR003156">
    <property type="entry name" value="DHHA1_dom"/>
</dbReference>
<dbReference type="InterPro" id="IPR018163">
    <property type="entry name" value="Thr/Ala-tRNA-synth_IIc_edit"/>
</dbReference>
<dbReference type="InterPro" id="IPR009000">
    <property type="entry name" value="Transl_B-barrel_sf"/>
</dbReference>
<dbReference type="InterPro" id="IPR012947">
    <property type="entry name" value="tRNA_SAD"/>
</dbReference>
<dbReference type="NCBIfam" id="TIGR00344">
    <property type="entry name" value="alaS"/>
    <property type="match status" value="1"/>
</dbReference>
<dbReference type="PANTHER" id="PTHR11777:SF9">
    <property type="entry name" value="ALANINE--TRNA LIGASE, CYTOPLASMIC"/>
    <property type="match status" value="1"/>
</dbReference>
<dbReference type="PANTHER" id="PTHR11777">
    <property type="entry name" value="ALANYL-TRNA SYNTHETASE"/>
    <property type="match status" value="1"/>
</dbReference>
<dbReference type="Pfam" id="PF02272">
    <property type="entry name" value="DHHA1"/>
    <property type="match status" value="1"/>
</dbReference>
<dbReference type="Pfam" id="PF01411">
    <property type="entry name" value="tRNA-synt_2c"/>
    <property type="match status" value="1"/>
</dbReference>
<dbReference type="Pfam" id="PF07973">
    <property type="entry name" value="tRNA_SAD"/>
    <property type="match status" value="1"/>
</dbReference>
<dbReference type="PRINTS" id="PR00980">
    <property type="entry name" value="TRNASYNTHALA"/>
</dbReference>
<dbReference type="SMART" id="SM00863">
    <property type="entry name" value="tRNA_SAD"/>
    <property type="match status" value="1"/>
</dbReference>
<dbReference type="SUPFAM" id="SSF55681">
    <property type="entry name" value="Class II aaRS and biotin synthetases"/>
    <property type="match status" value="1"/>
</dbReference>
<dbReference type="SUPFAM" id="SSF101353">
    <property type="entry name" value="Putative anticodon-binding domain of alanyl-tRNA synthetase (AlaRS)"/>
    <property type="match status" value="1"/>
</dbReference>
<dbReference type="SUPFAM" id="SSF55186">
    <property type="entry name" value="ThrRS/AlaRS common domain"/>
    <property type="match status" value="1"/>
</dbReference>
<dbReference type="SUPFAM" id="SSF50447">
    <property type="entry name" value="Translation proteins"/>
    <property type="match status" value="1"/>
</dbReference>
<dbReference type="PROSITE" id="PS50860">
    <property type="entry name" value="AA_TRNA_LIGASE_II_ALA"/>
    <property type="match status" value="1"/>
</dbReference>
<evidence type="ECO:0000255" key="1">
    <source>
        <dbReference type="HAMAP-Rule" id="MF_00036"/>
    </source>
</evidence>
<sequence length="880" mass="97354">MKQLTGAQIRQMFLDFFQEKGHAVEPSASLVPHEDPSLLWINSGVATLKKYFDGRVIPQNPRITNAQKSIRTNDIENVGKTARHHTFFEMLGNFSIGDYFKEEAITWAWEFLTSDKWIGFDKELLSVTIHPEDEEAFTIWNEKMGVPKERIIRLEENFWDIGEGPSGPNTEIFYDRGESYGNDFSDPELYPGGENERYLEVWNLVFSQFNHNPDGSYTPLPKKNIDTGMGLERMTSIVQDVPTNFDTDLFMPMIGATESISGEKYRNGDLEKDMAFKVIADHIRTVTFAVGDGALPSNEGRGYVLRRLLRRAVRYSKKLNINRPFMFELVPVVGEVMKDFYPEVLEKKDFIAKVVKNEEERFHETLHDGESILAEVIAKAKEEKTTVISGVDAFRLYDTYGFPIELTEEYAEEAGMTVDQAGFENEMEKQRERARAARQDVDSMQVQGGVLGEVKVASEFVGYGTVATESNVVALVKNGEYTDSLQAGEEGQLMLDVTPFYAESGGQIADRGYLLADGVKVVVKDVQKAPNGQNLHKVVVEEGTLTKDAAVKAVIDTKNRSSVVKNHTATHLLHQALKDILGTHVNQAGSLVTSERLRFDFSHFGQVQADELEKIERIVNEKIWESIDVAISQKAIEEAKEMGAMALFGEKYGDVVRVVQVGDYSLELCGGCHVDNTASIGIFKIVAESGIGAGTRRIEAVTGKSAYELMNDQVGLLKEAAGKMKTNPKDILTRVDGLFTEVKQLQKENESLAAKLSNIEAGNLTDSVMTVDGVNVLAAKVNVADMNNLRTMMDDLKNKLESAVVVLASVNDDKVNILAGVTKDLISQGYHAGKLVKEVASRCGGGGGGRPDMAQAGGKNPAQVEEALAFVQEYVKSVSK</sequence>
<reference key="1">
    <citation type="journal article" date="2008" name="Chem. Biol. Interact.">
        <title>Extending the Bacillus cereus group genomics to putative food-borne pathogens of different toxicity.</title>
        <authorList>
            <person name="Lapidus A."/>
            <person name="Goltsman E."/>
            <person name="Auger S."/>
            <person name="Galleron N."/>
            <person name="Segurens B."/>
            <person name="Dossat C."/>
            <person name="Land M.L."/>
            <person name="Broussolle V."/>
            <person name="Brillard J."/>
            <person name="Guinebretiere M.-H."/>
            <person name="Sanchis V."/>
            <person name="Nguen-the C."/>
            <person name="Lereclus D."/>
            <person name="Richardson P."/>
            <person name="Wincker P."/>
            <person name="Weissenbach J."/>
            <person name="Ehrlich S.D."/>
            <person name="Sorokin A."/>
        </authorList>
    </citation>
    <scope>NUCLEOTIDE SEQUENCE [LARGE SCALE GENOMIC DNA]</scope>
    <source>
        <strain>KBAB4</strain>
    </source>
</reference>
<feature type="chain" id="PRO_0000347501" description="Alanine--tRNA ligase">
    <location>
        <begin position="1"/>
        <end position="880"/>
    </location>
</feature>
<feature type="binding site" evidence="1">
    <location>
        <position position="567"/>
    </location>
    <ligand>
        <name>Zn(2+)</name>
        <dbReference type="ChEBI" id="CHEBI:29105"/>
    </ligand>
</feature>
<feature type="binding site" evidence="1">
    <location>
        <position position="571"/>
    </location>
    <ligand>
        <name>Zn(2+)</name>
        <dbReference type="ChEBI" id="CHEBI:29105"/>
    </ligand>
</feature>
<feature type="binding site" evidence="1">
    <location>
        <position position="669"/>
    </location>
    <ligand>
        <name>Zn(2+)</name>
        <dbReference type="ChEBI" id="CHEBI:29105"/>
    </ligand>
</feature>
<feature type="binding site" evidence="1">
    <location>
        <position position="673"/>
    </location>
    <ligand>
        <name>Zn(2+)</name>
        <dbReference type="ChEBI" id="CHEBI:29105"/>
    </ligand>
</feature>
<gene>
    <name evidence="1" type="primary">alaS</name>
    <name type="ordered locus">BcerKBAB4_4235</name>
</gene>